<sequence>MAAFKTLDDIGNISGKRVLVRVDLNVPVADGKVTDATRIERIAPTIAELSGKGAKVILLAHFGRPKDGPSPEFSLEPIARATAEVLGRPVGFASDCVGDMAGSAVAAMNKGDVLLFENTRFYKAEEKNDPAFSERLAANGDIFVNDAFSAAHRAHSSTEGLARLLPSFAGRTMQAELEALEKGLGNPVRPVVAIVGGAKVSTKIDLLMNLVKKVDALVIGGGMANTFLAARGTDVGKSLCEHDLAPTAKQIMIEAAEAGCAIILPVDGVVAKEFKAGAACETVAISDVPADGMILDVGEKTVKTIGEWIDRAATLVWNGPLGAFEIEPFDHATVAAAKHAAARTKAGKLVSVAGGGDTVAALNHAGVADDFTYVSTAGGAFLEWMEGKPLPGVDVLKR</sequence>
<feature type="chain" id="PRO_0000145992" description="Phosphoglycerate kinase">
    <location>
        <begin position="1"/>
        <end position="398"/>
    </location>
</feature>
<feature type="binding site" evidence="1">
    <location>
        <begin position="23"/>
        <end position="25"/>
    </location>
    <ligand>
        <name>substrate</name>
    </ligand>
</feature>
<feature type="binding site" evidence="1">
    <location>
        <position position="38"/>
    </location>
    <ligand>
        <name>substrate</name>
    </ligand>
</feature>
<feature type="binding site" evidence="1">
    <location>
        <begin position="61"/>
        <end position="64"/>
    </location>
    <ligand>
        <name>substrate</name>
    </ligand>
</feature>
<feature type="binding site" evidence="1">
    <location>
        <position position="120"/>
    </location>
    <ligand>
        <name>substrate</name>
    </ligand>
</feature>
<feature type="binding site" evidence="1">
    <location>
        <position position="153"/>
    </location>
    <ligand>
        <name>substrate</name>
    </ligand>
</feature>
<feature type="binding site" evidence="1">
    <location>
        <position position="203"/>
    </location>
    <ligand>
        <name>ATP</name>
        <dbReference type="ChEBI" id="CHEBI:30616"/>
    </ligand>
</feature>
<feature type="binding site" evidence="1">
    <location>
        <position position="325"/>
    </location>
    <ligand>
        <name>ATP</name>
        <dbReference type="ChEBI" id="CHEBI:30616"/>
    </ligand>
</feature>
<feature type="binding site" evidence="1">
    <location>
        <begin position="355"/>
        <end position="358"/>
    </location>
    <ligand>
        <name>ATP</name>
        <dbReference type="ChEBI" id="CHEBI:30616"/>
    </ligand>
</feature>
<accession>Q98FJ1</accession>
<organism>
    <name type="scientific">Mesorhizobium japonicum (strain LMG 29417 / CECT 9101 / MAFF 303099)</name>
    <name type="common">Mesorhizobium loti (strain MAFF 303099)</name>
    <dbReference type="NCBI Taxonomy" id="266835"/>
    <lineage>
        <taxon>Bacteria</taxon>
        <taxon>Pseudomonadati</taxon>
        <taxon>Pseudomonadota</taxon>
        <taxon>Alphaproteobacteria</taxon>
        <taxon>Hyphomicrobiales</taxon>
        <taxon>Phyllobacteriaceae</taxon>
        <taxon>Mesorhizobium</taxon>
    </lineage>
</organism>
<keyword id="KW-0067">ATP-binding</keyword>
<keyword id="KW-0963">Cytoplasm</keyword>
<keyword id="KW-0324">Glycolysis</keyword>
<keyword id="KW-0418">Kinase</keyword>
<keyword id="KW-0547">Nucleotide-binding</keyword>
<keyword id="KW-0808">Transferase</keyword>
<protein>
    <recommendedName>
        <fullName evidence="1">Phosphoglycerate kinase</fullName>
        <ecNumber evidence="1">2.7.2.3</ecNumber>
    </recommendedName>
</protein>
<dbReference type="EC" id="2.7.2.3" evidence="1"/>
<dbReference type="EMBL" id="BA000012">
    <property type="protein sequence ID" value="BAB50576.1"/>
    <property type="molecule type" value="Genomic_DNA"/>
</dbReference>
<dbReference type="RefSeq" id="WP_010911922.1">
    <property type="nucleotide sequence ID" value="NC_002678.2"/>
</dbReference>
<dbReference type="SMR" id="Q98FJ1"/>
<dbReference type="KEGG" id="mlo:mlr3753"/>
<dbReference type="eggNOG" id="COG0126">
    <property type="taxonomic scope" value="Bacteria"/>
</dbReference>
<dbReference type="HOGENOM" id="CLU_025427_0_2_5"/>
<dbReference type="UniPathway" id="UPA00109">
    <property type="reaction ID" value="UER00185"/>
</dbReference>
<dbReference type="Proteomes" id="UP000000552">
    <property type="component" value="Chromosome"/>
</dbReference>
<dbReference type="GO" id="GO:0005829">
    <property type="term" value="C:cytosol"/>
    <property type="evidence" value="ECO:0007669"/>
    <property type="project" value="TreeGrafter"/>
</dbReference>
<dbReference type="GO" id="GO:0043531">
    <property type="term" value="F:ADP binding"/>
    <property type="evidence" value="ECO:0007669"/>
    <property type="project" value="TreeGrafter"/>
</dbReference>
<dbReference type="GO" id="GO:0005524">
    <property type="term" value="F:ATP binding"/>
    <property type="evidence" value="ECO:0007669"/>
    <property type="project" value="UniProtKB-KW"/>
</dbReference>
<dbReference type="GO" id="GO:0004618">
    <property type="term" value="F:phosphoglycerate kinase activity"/>
    <property type="evidence" value="ECO:0007669"/>
    <property type="project" value="UniProtKB-UniRule"/>
</dbReference>
<dbReference type="GO" id="GO:0006094">
    <property type="term" value="P:gluconeogenesis"/>
    <property type="evidence" value="ECO:0007669"/>
    <property type="project" value="TreeGrafter"/>
</dbReference>
<dbReference type="GO" id="GO:0006096">
    <property type="term" value="P:glycolytic process"/>
    <property type="evidence" value="ECO:0007669"/>
    <property type="project" value="UniProtKB-UniRule"/>
</dbReference>
<dbReference type="FunFam" id="3.40.50.1260:FF:000006">
    <property type="entry name" value="Phosphoglycerate kinase"/>
    <property type="match status" value="1"/>
</dbReference>
<dbReference type="FunFam" id="3.40.50.1260:FF:000031">
    <property type="entry name" value="Phosphoglycerate kinase 1"/>
    <property type="match status" value="1"/>
</dbReference>
<dbReference type="Gene3D" id="3.40.50.1260">
    <property type="entry name" value="Phosphoglycerate kinase, N-terminal domain"/>
    <property type="match status" value="2"/>
</dbReference>
<dbReference type="HAMAP" id="MF_00145">
    <property type="entry name" value="Phosphoglyc_kinase"/>
    <property type="match status" value="1"/>
</dbReference>
<dbReference type="InterPro" id="IPR001576">
    <property type="entry name" value="Phosphoglycerate_kinase"/>
</dbReference>
<dbReference type="InterPro" id="IPR015911">
    <property type="entry name" value="Phosphoglycerate_kinase_CS"/>
</dbReference>
<dbReference type="InterPro" id="IPR015824">
    <property type="entry name" value="Phosphoglycerate_kinase_N"/>
</dbReference>
<dbReference type="InterPro" id="IPR036043">
    <property type="entry name" value="Phosphoglycerate_kinase_sf"/>
</dbReference>
<dbReference type="PANTHER" id="PTHR11406">
    <property type="entry name" value="PHOSPHOGLYCERATE KINASE"/>
    <property type="match status" value="1"/>
</dbReference>
<dbReference type="PANTHER" id="PTHR11406:SF23">
    <property type="entry name" value="PHOSPHOGLYCERATE KINASE 1, CHLOROPLASTIC-RELATED"/>
    <property type="match status" value="1"/>
</dbReference>
<dbReference type="Pfam" id="PF00162">
    <property type="entry name" value="PGK"/>
    <property type="match status" value="1"/>
</dbReference>
<dbReference type="PIRSF" id="PIRSF000724">
    <property type="entry name" value="Pgk"/>
    <property type="match status" value="1"/>
</dbReference>
<dbReference type="PRINTS" id="PR00477">
    <property type="entry name" value="PHGLYCKINASE"/>
</dbReference>
<dbReference type="SUPFAM" id="SSF53748">
    <property type="entry name" value="Phosphoglycerate kinase"/>
    <property type="match status" value="1"/>
</dbReference>
<dbReference type="PROSITE" id="PS00111">
    <property type="entry name" value="PGLYCERATE_KINASE"/>
    <property type="match status" value="1"/>
</dbReference>
<proteinExistence type="inferred from homology"/>
<gene>
    <name evidence="1" type="primary">pgk</name>
    <name type="ordered locus">mlr3753</name>
</gene>
<evidence type="ECO:0000255" key="1">
    <source>
        <dbReference type="HAMAP-Rule" id="MF_00145"/>
    </source>
</evidence>
<reference key="1">
    <citation type="journal article" date="2000" name="DNA Res.">
        <title>Complete genome structure of the nitrogen-fixing symbiotic bacterium Mesorhizobium loti.</title>
        <authorList>
            <person name="Kaneko T."/>
            <person name="Nakamura Y."/>
            <person name="Sato S."/>
            <person name="Asamizu E."/>
            <person name="Kato T."/>
            <person name="Sasamoto S."/>
            <person name="Watanabe A."/>
            <person name="Idesawa K."/>
            <person name="Ishikawa A."/>
            <person name="Kawashima K."/>
            <person name="Kimura T."/>
            <person name="Kishida Y."/>
            <person name="Kiyokawa C."/>
            <person name="Kohara M."/>
            <person name="Matsumoto M."/>
            <person name="Matsuno A."/>
            <person name="Mochizuki Y."/>
            <person name="Nakayama S."/>
            <person name="Nakazaki N."/>
            <person name="Shimpo S."/>
            <person name="Sugimoto M."/>
            <person name="Takeuchi C."/>
            <person name="Yamada M."/>
            <person name="Tabata S."/>
        </authorList>
    </citation>
    <scope>NUCLEOTIDE SEQUENCE [LARGE SCALE GENOMIC DNA]</scope>
    <source>
        <strain>LMG 29417 / CECT 9101 / MAFF 303099</strain>
    </source>
</reference>
<comment type="catalytic activity">
    <reaction evidence="1">
        <text>(2R)-3-phosphoglycerate + ATP = (2R)-3-phospho-glyceroyl phosphate + ADP</text>
        <dbReference type="Rhea" id="RHEA:14801"/>
        <dbReference type="ChEBI" id="CHEBI:30616"/>
        <dbReference type="ChEBI" id="CHEBI:57604"/>
        <dbReference type="ChEBI" id="CHEBI:58272"/>
        <dbReference type="ChEBI" id="CHEBI:456216"/>
        <dbReference type="EC" id="2.7.2.3"/>
    </reaction>
</comment>
<comment type="pathway">
    <text evidence="1">Carbohydrate degradation; glycolysis; pyruvate from D-glyceraldehyde 3-phosphate: step 2/5.</text>
</comment>
<comment type="subunit">
    <text evidence="1">Monomer.</text>
</comment>
<comment type="subcellular location">
    <subcellularLocation>
        <location evidence="1">Cytoplasm</location>
    </subcellularLocation>
</comment>
<comment type="similarity">
    <text evidence="1">Belongs to the phosphoglycerate kinase family.</text>
</comment>
<name>PGK_RHILO</name>